<sequence length="738" mass="82233">MSYPPPVGDSIKLKVQASNDPEEAFTNRAYLPISSFSFLFPNVQSNLYTTNTNYIKIRVGANEYILSASPNKNMKPDSIALSKALRGWMYVSNNEEVYVEFYDPNPNICGSMKVSIDYLTKGKQGPKQDSQEIIGKIIDNFNSQYFTFGQLFYIKNSNSTFELRVEAVETNEVPTKDKGWAIISPATKIILQKMPGSLIDIETNGPLVVNQIFTSDWDFENMGIGGLDAEFRDIFRRAFSSRIFPPAIVKKLGVNHVKGMLLYGPPGTGKTLIARQIGKMLNGREPKVVSGPSILNKYVGQSEENIRMLFRDAEIEQKAKGDDSGLHIIIFDELDAICKSRGSRQGDSGVGDSVVNQLLAMIDGVESLNNILVIGMTNRKDMIDEALLRPGRLEVHVEISLPDEHGREQIFKIHTAKMRDQNALDKDVNLANYAHTTRNYSGAEIEGVVKSAASYAFSRQVDTKNIKNVEIKPEDIKVCDQDFKRAITEVTPSFGSTDNQFESYAENGIINYGPVFDKLLQSGNAFVEQVKKSNRTPMMSVLLSGRPGCGKSSLAATLAKSSEFPFTRIISPNDLLGYNESAKASKITKVFEDSYKSPMSCVVVDEIERLIEYVPIGPRFSNLILQTLAVLFKRTPPKGRKLLVIATTSNPDILKDMDIMDCFATVLSVPSISTAKEFQTVCFELGFTQKEASEAASFFTSPITIKQIIMIVEMARQEEGNFIDNFKMCLEDFNIRNF</sequence>
<accession>Q75JI3</accession>
<accession>O15646</accession>
<accession>Q552E0</accession>
<evidence type="ECO:0000250" key="1"/>
<evidence type="ECO:0000269" key="2">
    <source>
    </source>
</evidence>
<evidence type="ECO:0000269" key="3">
    <source>
    </source>
</evidence>
<evidence type="ECO:0000269" key="4">
    <source>
    </source>
</evidence>
<evidence type="ECO:0000269" key="5">
    <source>
    </source>
</evidence>
<evidence type="ECO:0000269" key="6">
    <source>
    </source>
</evidence>
<evidence type="ECO:0000269" key="7">
    <source>
    </source>
</evidence>
<evidence type="ECO:0000269" key="8">
    <source>
    </source>
</evidence>
<evidence type="ECO:0000269" key="9">
    <source>
    </source>
</evidence>
<evidence type="ECO:0000305" key="10"/>
<protein>
    <recommendedName>
        <fullName>Vesicle-fusing ATPase</fullName>
        <ecNumber>3.6.4.6</ecNumber>
    </recommendedName>
    <alternativeName>
        <fullName>N-ethylmaleimide-sensitive factor A</fullName>
    </alternativeName>
    <alternativeName>
        <fullName>NEM-sensitive fusion protein A</fullName>
    </alternativeName>
    <alternativeName>
        <fullName>Vesicular-fusion protein nfsA</fullName>
    </alternativeName>
</protein>
<organism>
    <name type="scientific">Dictyostelium discoideum</name>
    <name type="common">Social amoeba</name>
    <dbReference type="NCBI Taxonomy" id="44689"/>
    <lineage>
        <taxon>Eukaryota</taxon>
        <taxon>Amoebozoa</taxon>
        <taxon>Evosea</taxon>
        <taxon>Eumycetozoa</taxon>
        <taxon>Dictyostelia</taxon>
        <taxon>Dictyosteliales</taxon>
        <taxon>Dictyosteliaceae</taxon>
        <taxon>Dictyostelium</taxon>
    </lineage>
</organism>
<feature type="chain" id="PRO_0000327890" description="Vesicle-fusing ATPase">
    <location>
        <begin position="1"/>
        <end position="738"/>
    </location>
</feature>
<feature type="binding site" evidence="1">
    <location>
        <begin position="507"/>
        <end position="512"/>
    </location>
    <ligand>
        <name>ATP</name>
        <dbReference type="ChEBI" id="CHEBI:30616"/>
    </ligand>
</feature>
<feature type="binding site" evidence="1">
    <location>
        <begin position="547"/>
        <end position="554"/>
    </location>
    <ligand>
        <name>ATP</name>
        <dbReference type="ChEBI" id="CHEBI:30616"/>
    </ligand>
</feature>
<feature type="sequence conflict" description="In Ref. 1; AAC48226." evidence="10" ref="1">
    <original>F</original>
    <variation>L</variation>
    <location>
        <position position="501"/>
    </location>
</feature>
<feature type="sequence conflict" description="In Ref. 1; AAC48226." evidence="10" ref="1">
    <original>E</original>
    <variation>D</variation>
    <location>
        <position position="592"/>
    </location>
</feature>
<gene>
    <name type="primary">nsfA</name>
    <name type="ORF">DDB_G0276153</name>
</gene>
<keyword id="KW-0067">ATP-binding</keyword>
<keyword id="KW-0145">Chemotaxis</keyword>
<keyword id="KW-0968">Cytoplasmic vesicle</keyword>
<keyword id="KW-0967">Endosome</keyword>
<keyword id="KW-0931">ER-Golgi transport</keyword>
<keyword id="KW-0378">Hydrolase</keyword>
<keyword id="KW-0460">Magnesium</keyword>
<keyword id="KW-0472">Membrane</keyword>
<keyword id="KW-0479">Metal-binding</keyword>
<keyword id="KW-0547">Nucleotide-binding</keyword>
<keyword id="KW-0653">Protein transport</keyword>
<keyword id="KW-1185">Reference proteome</keyword>
<keyword id="KW-0677">Repeat</keyword>
<keyword id="KW-0813">Transport</keyword>
<proteinExistence type="evidence at protein level"/>
<comment type="function">
    <text evidence="3 4 5 6 7 8 9">Required for vesicle-mediated transport. Involved in endocytosis and endosome-endosome fusion. May be required for transport from the endoplasmic reticulum to the Golgi stack, and for the fusion of transport vesicles within the Golgi cisternae. Required for cell polarity, locomotion and chemotaxis.</text>
</comment>
<comment type="catalytic activity">
    <reaction>
        <text>ATP + H2O = ADP + phosphate + H(+)</text>
        <dbReference type="Rhea" id="RHEA:13065"/>
        <dbReference type="ChEBI" id="CHEBI:15377"/>
        <dbReference type="ChEBI" id="CHEBI:15378"/>
        <dbReference type="ChEBI" id="CHEBI:30616"/>
        <dbReference type="ChEBI" id="CHEBI:43474"/>
        <dbReference type="ChEBI" id="CHEBI:456216"/>
        <dbReference type="EC" id="3.6.4.6"/>
    </reaction>
</comment>
<comment type="cofactor">
    <cofactor evidence="1">
        <name>Mg(2+)</name>
        <dbReference type="ChEBI" id="CHEBI:18420"/>
    </cofactor>
    <text evidence="1">Binds 1 Mg(2+) ion per subunit.</text>
</comment>
<comment type="subunit">
    <text evidence="2 3 4">Interacts with syn7A, snpA and snpC.</text>
</comment>
<comment type="interaction">
    <interactant intactId="EBI-1810142">
        <id>Q75JI3</id>
    </interactant>
    <interactant intactId="EBI-1810173">
        <id>Q54NP6</id>
        <label>snpA</label>
    </interactant>
    <organismsDiffer>false</organismsDiffer>
    <experiments>2</experiments>
</comment>
<comment type="interaction">
    <interactant intactId="EBI-1810142">
        <id>Q75JI3</id>
    </interactant>
    <interactant intactId="EBI-1810184">
        <id>Q9U9R7</id>
        <label>snpC</label>
    </interactant>
    <organismsDiffer>false</organismsDiffer>
    <experiments>2</experiments>
</comment>
<comment type="interaction">
    <interactant intactId="EBI-1810142">
        <id>Q75JI3</id>
    </interactant>
    <interactant intactId="EBI-1810238">
        <id>Q54JY7</id>
        <label>syn7A</label>
    </interactant>
    <organismsDiffer>false</organismsDiffer>
    <experiments>2</experiments>
</comment>
<comment type="subcellular location">
    <subcellularLocation>
        <location evidence="2">Cytoplasmic vesicle membrane</location>
        <topology evidence="2">Peripheral membrane protein</topology>
        <orientation evidence="2">Cytoplasmic side</orientation>
    </subcellularLocation>
    <subcellularLocation>
        <location evidence="2">Endosome membrane</location>
        <topology evidence="2">Peripheral membrane protein</topology>
        <orientation evidence="2">Cytoplasmic side</orientation>
    </subcellularLocation>
</comment>
<comment type="developmental stage">
    <text evidence="9">Expressed in relatively constant amounts throughout the entire differentiation cycle.</text>
</comment>
<comment type="similarity">
    <text evidence="10">Belongs to the AAA ATPase family.</text>
</comment>
<reference key="1">
    <citation type="journal article" date="1998" name="Gene">
        <title>Identification of the Dictyostelium discoideum homolog of the N-ethylmaleimide-sensitive fusion protein.</title>
        <authorList>
            <person name="Weidenhaupt M."/>
            <person name="Bruckert F."/>
            <person name="Satre M."/>
        </authorList>
    </citation>
    <scope>NUCLEOTIDE SEQUENCE [MRNA]</scope>
    <scope>FUNCTION</scope>
    <scope>DEVELOPMENTAL STAGE</scope>
    <source>
        <strain>AX2</strain>
    </source>
</reference>
<reference key="2">
    <citation type="journal article" date="2002" name="Nature">
        <title>Sequence and analysis of chromosome 2 of Dictyostelium discoideum.</title>
        <authorList>
            <person name="Gloeckner G."/>
            <person name="Eichinger L."/>
            <person name="Szafranski K."/>
            <person name="Pachebat J.A."/>
            <person name="Bankier A.T."/>
            <person name="Dear P.H."/>
            <person name="Lehmann R."/>
            <person name="Baumgart C."/>
            <person name="Parra G."/>
            <person name="Abril J.F."/>
            <person name="Guigo R."/>
            <person name="Kumpf K."/>
            <person name="Tunggal B."/>
            <person name="Cox E.C."/>
            <person name="Quail M.A."/>
            <person name="Platzer M."/>
            <person name="Rosenthal A."/>
            <person name="Noegel A.A."/>
        </authorList>
    </citation>
    <scope>NUCLEOTIDE SEQUENCE [LARGE SCALE GENOMIC DNA]</scope>
    <source>
        <strain>AX4</strain>
    </source>
</reference>
<reference key="3">
    <citation type="journal article" date="2005" name="Nature">
        <title>The genome of the social amoeba Dictyostelium discoideum.</title>
        <authorList>
            <person name="Eichinger L."/>
            <person name="Pachebat J.A."/>
            <person name="Gloeckner G."/>
            <person name="Rajandream M.A."/>
            <person name="Sucgang R."/>
            <person name="Berriman M."/>
            <person name="Song J."/>
            <person name="Olsen R."/>
            <person name="Szafranski K."/>
            <person name="Xu Q."/>
            <person name="Tunggal B."/>
            <person name="Kummerfeld S."/>
            <person name="Madera M."/>
            <person name="Konfortov B.A."/>
            <person name="Rivero F."/>
            <person name="Bankier A.T."/>
            <person name="Lehmann R."/>
            <person name="Hamlin N."/>
            <person name="Davies R."/>
            <person name="Gaudet P."/>
            <person name="Fey P."/>
            <person name="Pilcher K."/>
            <person name="Chen G."/>
            <person name="Saunders D."/>
            <person name="Sodergren E.J."/>
            <person name="Davis P."/>
            <person name="Kerhornou A."/>
            <person name="Nie X."/>
            <person name="Hall N."/>
            <person name="Anjard C."/>
            <person name="Hemphill L."/>
            <person name="Bason N."/>
            <person name="Farbrother P."/>
            <person name="Desany B."/>
            <person name="Just E."/>
            <person name="Morio T."/>
            <person name="Rost R."/>
            <person name="Churcher C.M."/>
            <person name="Cooper J."/>
            <person name="Haydock S."/>
            <person name="van Driessche N."/>
            <person name="Cronin A."/>
            <person name="Goodhead I."/>
            <person name="Muzny D.M."/>
            <person name="Mourier T."/>
            <person name="Pain A."/>
            <person name="Lu M."/>
            <person name="Harper D."/>
            <person name="Lindsay R."/>
            <person name="Hauser H."/>
            <person name="James K.D."/>
            <person name="Quiles M."/>
            <person name="Madan Babu M."/>
            <person name="Saito T."/>
            <person name="Buchrieser C."/>
            <person name="Wardroper A."/>
            <person name="Felder M."/>
            <person name="Thangavelu M."/>
            <person name="Johnson D."/>
            <person name="Knights A."/>
            <person name="Loulseged H."/>
            <person name="Mungall K.L."/>
            <person name="Oliver K."/>
            <person name="Price C."/>
            <person name="Quail M.A."/>
            <person name="Urushihara H."/>
            <person name="Hernandez J."/>
            <person name="Rabbinowitsch E."/>
            <person name="Steffen D."/>
            <person name="Sanders M."/>
            <person name="Ma J."/>
            <person name="Kohara Y."/>
            <person name="Sharp S."/>
            <person name="Simmonds M.N."/>
            <person name="Spiegler S."/>
            <person name="Tivey A."/>
            <person name="Sugano S."/>
            <person name="White B."/>
            <person name="Walker D."/>
            <person name="Woodward J.R."/>
            <person name="Winckler T."/>
            <person name="Tanaka Y."/>
            <person name="Shaulsky G."/>
            <person name="Schleicher M."/>
            <person name="Weinstock G.M."/>
            <person name="Rosenthal A."/>
            <person name="Cox E.C."/>
            <person name="Chisholm R.L."/>
            <person name="Gibbs R.A."/>
            <person name="Loomis W.F."/>
            <person name="Platzer M."/>
            <person name="Kay R.R."/>
            <person name="Williams J.G."/>
            <person name="Dear P.H."/>
            <person name="Noegel A.A."/>
            <person name="Barrell B.G."/>
            <person name="Kuspa A."/>
        </authorList>
    </citation>
    <scope>NUCLEOTIDE SEQUENCE [LARGE SCALE GENOMIC DNA]</scope>
    <source>
        <strain>AX4</strain>
    </source>
</reference>
<reference key="4">
    <citation type="journal article" date="1992" name="J. Biol. Chem.">
        <title>Characterization of endosome-endosome fusion in a cell-free system using Dictyostelium discoideum.</title>
        <authorList>
            <person name="Lenhard J.M."/>
            <person name="Mayorga L."/>
            <person name="Stahl P.D."/>
        </authorList>
    </citation>
    <scope>FUNCTION</scope>
</reference>
<reference key="5">
    <citation type="journal article" date="1998" name="J. Biol. Chem.">
        <title>In vitro reconstituted Dictyostelium discoideum early endosome fusion is regulated by Rab7 but proceeds in the absence of ATP-Mg2+ from the bulk solution.</title>
        <authorList>
            <person name="Laurent O."/>
            <person name="Bruckert F."/>
            <person name="Adessi C."/>
            <person name="Satre M."/>
        </authorList>
    </citation>
    <scope>FUNCTION</scope>
</reference>
<reference key="6">
    <citation type="journal article" date="2000" name="Eur. J. Biochem.">
        <title>Functional and molecular identification of novel members of the ubiquitous membrane fusion proteins alpha- and gamma-SNAP (soluble N-ethylmaleimide-sensitive factor-attachment proteins) families in Dictyostelium discoideum.</title>
        <authorList>
            <person name="Weidenhaupt M."/>
            <person name="Bruckert F."/>
            <person name="Louwagie M."/>
            <person name="Garin J."/>
            <person name="Satre M."/>
        </authorList>
    </citation>
    <scope>SUBCELLULAR LOCATION</scope>
    <scope>INTERACTION WITH SNPA AND SNPC</scope>
</reference>
<reference key="7">
    <citation type="journal article" date="2000" name="J. Biol. Chem.">
        <title>A syntaxin 7 homologue is present in Dictyostelium discoideum endosomes and controls their homotypic fusion.</title>
        <authorList>
            <person name="Bogdanovic A."/>
            <person name="Bruckert F."/>
            <person name="Morio T."/>
            <person name="Satre M."/>
        </authorList>
    </citation>
    <scope>FUNCTION</scope>
    <scope>INTERACTION WITH SYN7A</scope>
</reference>
<reference key="8">
    <citation type="journal article" date="2002" name="Biochem. J.">
        <title>Syntaxin 7, syntaxin 8, Vti1 and VAMP7 (vesicle-associated membrane protein 7) form an active SNARE complex for early macropinocytic compartment fusion in Dictyostelium discoideum.</title>
        <authorList>
            <person name="Bogdanovic A."/>
            <person name="Bennett N."/>
            <person name="Kieffer S."/>
            <person name="Louwagie M."/>
            <person name="Morio T."/>
            <person name="Garin J."/>
            <person name="Satre M."/>
            <person name="Bruckert F."/>
        </authorList>
    </citation>
    <scope>FUNCTION</scope>
    <scope>INTERACTION WITH SYN7A</scope>
    <scope>IDENTIFICATION BY MASS SPECTROMETRY</scope>
</reference>
<reference key="9">
    <citation type="journal article" date="2002" name="Development">
        <title>Cell polarity and locomotion, as well as endocytosis, depend on NSF.</title>
        <authorList>
            <person name="Thompson C.R.L."/>
            <person name="Bretscher M.S."/>
        </authorList>
    </citation>
    <scope>FUNCTION</scope>
</reference>
<reference key="10">
    <citation type="journal article" date="2007" name="J. Cell Sci.">
        <title>Possible roles of the endocytic cycle in cell motility.</title>
        <authorList>
            <person name="Traynor D."/>
            <person name="Kay R.R."/>
        </authorList>
    </citation>
    <scope>FUNCTION</scope>
</reference>
<name>NSF_DICDI</name>
<dbReference type="EC" id="3.6.4.6"/>
<dbReference type="EMBL" id="AF006826">
    <property type="protein sequence ID" value="AAC48226.1"/>
    <property type="molecule type" value="mRNA"/>
</dbReference>
<dbReference type="EMBL" id="AAFI02000014">
    <property type="protein sequence ID" value="EAL69376.1"/>
    <property type="molecule type" value="Genomic_DNA"/>
</dbReference>
<dbReference type="RefSeq" id="XP_643273.1">
    <property type="nucleotide sequence ID" value="XM_638181.1"/>
</dbReference>
<dbReference type="SMR" id="Q75JI3"/>
<dbReference type="FunCoup" id="Q75JI3">
    <property type="interactions" value="884"/>
</dbReference>
<dbReference type="IntAct" id="Q75JI3">
    <property type="interactions" value="3"/>
</dbReference>
<dbReference type="STRING" id="44689.Q75JI3"/>
<dbReference type="PaxDb" id="44689-DDB0185052"/>
<dbReference type="EnsemblProtists" id="EAL69376">
    <property type="protein sequence ID" value="EAL69376"/>
    <property type="gene ID" value="DDB_G0276153"/>
</dbReference>
<dbReference type="GeneID" id="8620316"/>
<dbReference type="KEGG" id="ddi:DDB_G0276153"/>
<dbReference type="dictyBase" id="DDB_G0276153">
    <property type="gene designation" value="nsfA"/>
</dbReference>
<dbReference type="VEuPathDB" id="AmoebaDB:DDB_G0276153"/>
<dbReference type="eggNOG" id="KOG0741">
    <property type="taxonomic scope" value="Eukaryota"/>
</dbReference>
<dbReference type="HOGENOM" id="CLU_008037_2_0_1"/>
<dbReference type="InParanoid" id="Q75JI3"/>
<dbReference type="OMA" id="QFEQHVT"/>
<dbReference type="PhylomeDB" id="Q75JI3"/>
<dbReference type="BRENDA" id="3.6.4.6">
    <property type="organism ID" value="1939"/>
</dbReference>
<dbReference type="Reactome" id="R-DDI-204005">
    <property type="pathway name" value="COPII-mediated vesicle transport"/>
</dbReference>
<dbReference type="Reactome" id="R-DDI-6807878">
    <property type="pathway name" value="COPI-mediated anterograde transport"/>
</dbReference>
<dbReference type="Reactome" id="R-DDI-6811434">
    <property type="pathway name" value="COPI-dependent Golgi-to-ER retrograde traffic"/>
</dbReference>
<dbReference type="Reactome" id="R-DDI-6811438">
    <property type="pathway name" value="Intra-Golgi traffic"/>
</dbReference>
<dbReference type="Reactome" id="R-DDI-6811440">
    <property type="pathway name" value="Retrograde transport at the Trans-Golgi-Network"/>
</dbReference>
<dbReference type="PRO" id="PR:Q75JI3"/>
<dbReference type="Proteomes" id="UP000002195">
    <property type="component" value="Chromosome 2"/>
</dbReference>
<dbReference type="GO" id="GO:0010008">
    <property type="term" value="C:endosome membrane"/>
    <property type="evidence" value="ECO:0007669"/>
    <property type="project" value="UniProtKB-SubCell"/>
</dbReference>
<dbReference type="GO" id="GO:0005795">
    <property type="term" value="C:Golgi stack"/>
    <property type="evidence" value="ECO:0000318"/>
    <property type="project" value="GO_Central"/>
</dbReference>
<dbReference type="GO" id="GO:0016020">
    <property type="term" value="C:membrane"/>
    <property type="evidence" value="ECO:0000314"/>
    <property type="project" value="dictyBase"/>
</dbReference>
<dbReference type="GO" id="GO:0005524">
    <property type="term" value="F:ATP binding"/>
    <property type="evidence" value="ECO:0007669"/>
    <property type="project" value="UniProtKB-KW"/>
</dbReference>
<dbReference type="GO" id="GO:0016887">
    <property type="term" value="F:ATP hydrolysis activity"/>
    <property type="evidence" value="ECO:0000318"/>
    <property type="project" value="GO_Central"/>
</dbReference>
<dbReference type="GO" id="GO:0046872">
    <property type="term" value="F:metal ion binding"/>
    <property type="evidence" value="ECO:0007669"/>
    <property type="project" value="UniProtKB-KW"/>
</dbReference>
<dbReference type="GO" id="GO:0048870">
    <property type="term" value="P:cell motility"/>
    <property type="evidence" value="ECO:0000315"/>
    <property type="project" value="dictyBase"/>
</dbReference>
<dbReference type="GO" id="GO:0006935">
    <property type="term" value="P:chemotaxis"/>
    <property type="evidence" value="ECO:0007669"/>
    <property type="project" value="UniProtKB-KW"/>
</dbReference>
<dbReference type="GO" id="GO:0006897">
    <property type="term" value="P:endocytosis"/>
    <property type="evidence" value="ECO:0000315"/>
    <property type="project" value="dictyBase"/>
</dbReference>
<dbReference type="GO" id="GO:0043001">
    <property type="term" value="P:Golgi to plasma membrane protein transport"/>
    <property type="evidence" value="ECO:0000318"/>
    <property type="project" value="GO_Central"/>
</dbReference>
<dbReference type="GO" id="GO:0006891">
    <property type="term" value="P:intra-Golgi vesicle-mediated transport"/>
    <property type="evidence" value="ECO:0000318"/>
    <property type="project" value="GO_Central"/>
</dbReference>
<dbReference type="GO" id="GO:0006909">
    <property type="term" value="P:phagocytosis"/>
    <property type="evidence" value="ECO:0000315"/>
    <property type="project" value="dictyBase"/>
</dbReference>
<dbReference type="GO" id="GO:0009306">
    <property type="term" value="P:protein secretion"/>
    <property type="evidence" value="ECO:0000315"/>
    <property type="project" value="dictyBase"/>
</dbReference>
<dbReference type="GO" id="GO:0035494">
    <property type="term" value="P:SNARE complex disassembly"/>
    <property type="evidence" value="ECO:0007669"/>
    <property type="project" value="InterPro"/>
</dbReference>
<dbReference type="CDD" id="cd00009">
    <property type="entry name" value="AAA"/>
    <property type="match status" value="1"/>
</dbReference>
<dbReference type="CDD" id="cd19504">
    <property type="entry name" value="RecA-like_NSF-SEC18_r1-like"/>
    <property type="match status" value="1"/>
</dbReference>
<dbReference type="FunFam" id="1.10.8.60:FF:000146">
    <property type="entry name" value="Vesicle-fusing ATPase"/>
    <property type="match status" value="1"/>
</dbReference>
<dbReference type="FunFam" id="3.40.50.300:FF:000166">
    <property type="entry name" value="vesicle-fusing ATPase isoform X1"/>
    <property type="match status" value="1"/>
</dbReference>
<dbReference type="FunFam" id="3.40.50.300:FF:000187">
    <property type="entry name" value="Vesicular-fusion ATPase SEC18"/>
    <property type="match status" value="1"/>
</dbReference>
<dbReference type="Gene3D" id="1.10.8.60">
    <property type="match status" value="1"/>
</dbReference>
<dbReference type="Gene3D" id="2.40.40.20">
    <property type="match status" value="1"/>
</dbReference>
<dbReference type="Gene3D" id="3.10.330.10">
    <property type="match status" value="1"/>
</dbReference>
<dbReference type="Gene3D" id="3.40.50.300">
    <property type="entry name" value="P-loop containing nucleotide triphosphate hydrolases"/>
    <property type="match status" value="2"/>
</dbReference>
<dbReference type="InterPro" id="IPR003593">
    <property type="entry name" value="AAA+_ATPase"/>
</dbReference>
<dbReference type="InterPro" id="IPR041569">
    <property type="entry name" value="AAA_lid_3"/>
</dbReference>
<dbReference type="InterPro" id="IPR009010">
    <property type="entry name" value="Asp_de-COase-like_dom_sf"/>
</dbReference>
<dbReference type="InterPro" id="IPR003959">
    <property type="entry name" value="ATPase_AAA_core"/>
</dbReference>
<dbReference type="InterPro" id="IPR003960">
    <property type="entry name" value="ATPase_AAA_CS"/>
</dbReference>
<dbReference type="InterPro" id="IPR004201">
    <property type="entry name" value="Cdc48_dom2"/>
</dbReference>
<dbReference type="InterPro" id="IPR029067">
    <property type="entry name" value="CDC48_domain_2-like_sf"/>
</dbReference>
<dbReference type="InterPro" id="IPR027417">
    <property type="entry name" value="P-loop_NTPase"/>
</dbReference>
<dbReference type="InterPro" id="IPR039812">
    <property type="entry name" value="Vesicle-fus_ATPase"/>
</dbReference>
<dbReference type="PANTHER" id="PTHR23078:SF3">
    <property type="entry name" value="VESICLE-FUSING ATPASE"/>
    <property type="match status" value="1"/>
</dbReference>
<dbReference type="PANTHER" id="PTHR23078">
    <property type="entry name" value="VESICULAR-FUSION PROTEIN NSF"/>
    <property type="match status" value="1"/>
</dbReference>
<dbReference type="Pfam" id="PF00004">
    <property type="entry name" value="AAA"/>
    <property type="match status" value="2"/>
</dbReference>
<dbReference type="Pfam" id="PF17862">
    <property type="entry name" value="AAA_lid_3"/>
    <property type="match status" value="1"/>
</dbReference>
<dbReference type="Pfam" id="PF02933">
    <property type="entry name" value="CDC48_2"/>
    <property type="match status" value="1"/>
</dbReference>
<dbReference type="SMART" id="SM00382">
    <property type="entry name" value="AAA"/>
    <property type="match status" value="2"/>
</dbReference>
<dbReference type="SUPFAM" id="SSF50692">
    <property type="entry name" value="ADC-like"/>
    <property type="match status" value="1"/>
</dbReference>
<dbReference type="SUPFAM" id="SSF54585">
    <property type="entry name" value="Cdc48 domain 2-like"/>
    <property type="match status" value="1"/>
</dbReference>
<dbReference type="SUPFAM" id="SSF52540">
    <property type="entry name" value="P-loop containing nucleoside triphosphate hydrolases"/>
    <property type="match status" value="2"/>
</dbReference>
<dbReference type="PROSITE" id="PS00674">
    <property type="entry name" value="AAA"/>
    <property type="match status" value="1"/>
</dbReference>